<evidence type="ECO:0000255" key="1">
    <source>
        <dbReference type="HAMAP-Rule" id="MF_01588"/>
    </source>
</evidence>
<proteinExistence type="inferred from homology"/>
<reference key="1">
    <citation type="journal article" date="2008" name="J. Bacteriol.">
        <title>The pangenome structure of Escherichia coli: comparative genomic analysis of E. coli commensal and pathogenic isolates.</title>
        <authorList>
            <person name="Rasko D.A."/>
            <person name="Rosovitz M.J."/>
            <person name="Myers G.S.A."/>
            <person name="Mongodin E.F."/>
            <person name="Fricke W.F."/>
            <person name="Gajer P."/>
            <person name="Crabtree J."/>
            <person name="Sebaihia M."/>
            <person name="Thomson N.R."/>
            <person name="Chaudhuri R."/>
            <person name="Henderson I.R."/>
            <person name="Sperandio V."/>
            <person name="Ravel J."/>
        </authorList>
    </citation>
    <scope>NUCLEOTIDE SEQUENCE [LARGE SCALE GENOMIC DNA]</scope>
    <source>
        <strain>E24377A / ETEC</strain>
    </source>
</reference>
<gene>
    <name evidence="1" type="primary">ligA</name>
    <name type="ordered locus">EcE24377A_2698</name>
</gene>
<name>DNLJ_ECO24</name>
<sequence>MESIEQQLTELRTTLRHHEYLYHVMDAPEIPDAEYDRLMRELRELETKHPELITPDSPTQRVGAAPLAAFSQIRHEVPMLSLDNVFDEESFLAFNKRVQDRLKNNEKVTWCCELKLDGLAVSILYENGVLVSAATRGDGTTGEDITSNVRTIRAIPLKLHGENIPARLEVRGEVFLPQAGFEKINEDARRTGGKVFANPRNAAAGSLRQLDPRITAKRPLTFFCYGVGVLEGGELPDTHLGRLLQFKKWGLPVSDRVTLCESAEEVLAFYHKVEEDRPTLGFDIDGVVIKVNSLEQQEQLGFVARAPRWAVAFKFPAQEQMTFVRDVEFQVGRTGAITPVARLEPVHVAGVLVSNATLHNADEIERLGLRIGDKVVIRRAGDVIPQVVNVVLSERPEDTREVVFPTHCPVCGSDVERVEGEAVARCTGGLICGAQRKESLKHFVSRRAMDVDGMGDKIIDQLVEKEYVHTPADLFKLTAGKLTGLERMGPKSAQNVVNALEKAKETTFARFLYALGIREVGEATAAGLAAYFGTLEALEAASIEELQKVPDVGIVVASHVHNFFAEESNRNVISELLAEGVHWPAPIVINAEEIDSPFAGKTVVLTGSLSQMSRDDAKARLVELGAKVAGSVSKKTDLVIAGEAAGSKLAKAQELGIEVIDEAEMLRLLGS</sequence>
<organism>
    <name type="scientific">Escherichia coli O139:H28 (strain E24377A / ETEC)</name>
    <dbReference type="NCBI Taxonomy" id="331111"/>
    <lineage>
        <taxon>Bacteria</taxon>
        <taxon>Pseudomonadati</taxon>
        <taxon>Pseudomonadota</taxon>
        <taxon>Gammaproteobacteria</taxon>
        <taxon>Enterobacterales</taxon>
        <taxon>Enterobacteriaceae</taxon>
        <taxon>Escherichia</taxon>
    </lineage>
</organism>
<dbReference type="EC" id="6.5.1.2" evidence="1"/>
<dbReference type="EMBL" id="CP000800">
    <property type="protein sequence ID" value="ABV17838.1"/>
    <property type="molecule type" value="Genomic_DNA"/>
</dbReference>
<dbReference type="RefSeq" id="WP_000443665.1">
    <property type="nucleotide sequence ID" value="NC_009801.1"/>
</dbReference>
<dbReference type="SMR" id="A7ZPL2"/>
<dbReference type="GeneID" id="75204318"/>
<dbReference type="KEGG" id="ecw:EcE24377A_2698"/>
<dbReference type="HOGENOM" id="CLU_007764_2_1_6"/>
<dbReference type="Proteomes" id="UP000001122">
    <property type="component" value="Chromosome"/>
</dbReference>
<dbReference type="GO" id="GO:0005829">
    <property type="term" value="C:cytosol"/>
    <property type="evidence" value="ECO:0007669"/>
    <property type="project" value="TreeGrafter"/>
</dbReference>
<dbReference type="GO" id="GO:0003677">
    <property type="term" value="F:DNA binding"/>
    <property type="evidence" value="ECO:0007669"/>
    <property type="project" value="InterPro"/>
</dbReference>
<dbReference type="GO" id="GO:0003911">
    <property type="term" value="F:DNA ligase (NAD+) activity"/>
    <property type="evidence" value="ECO:0007669"/>
    <property type="project" value="UniProtKB-UniRule"/>
</dbReference>
<dbReference type="GO" id="GO:0046872">
    <property type="term" value="F:metal ion binding"/>
    <property type="evidence" value="ECO:0007669"/>
    <property type="project" value="UniProtKB-KW"/>
</dbReference>
<dbReference type="GO" id="GO:0006281">
    <property type="term" value="P:DNA repair"/>
    <property type="evidence" value="ECO:0007669"/>
    <property type="project" value="UniProtKB-KW"/>
</dbReference>
<dbReference type="GO" id="GO:0006260">
    <property type="term" value="P:DNA replication"/>
    <property type="evidence" value="ECO:0007669"/>
    <property type="project" value="UniProtKB-KW"/>
</dbReference>
<dbReference type="CDD" id="cd17748">
    <property type="entry name" value="BRCT_DNA_ligase_like"/>
    <property type="match status" value="1"/>
</dbReference>
<dbReference type="CDD" id="cd00114">
    <property type="entry name" value="LIGANc"/>
    <property type="match status" value="1"/>
</dbReference>
<dbReference type="FunFam" id="1.10.150.20:FF:000006">
    <property type="entry name" value="DNA ligase"/>
    <property type="match status" value="1"/>
</dbReference>
<dbReference type="FunFam" id="1.10.150.20:FF:000007">
    <property type="entry name" value="DNA ligase"/>
    <property type="match status" value="1"/>
</dbReference>
<dbReference type="FunFam" id="1.10.287.610:FF:000002">
    <property type="entry name" value="DNA ligase"/>
    <property type="match status" value="1"/>
</dbReference>
<dbReference type="FunFam" id="2.40.50.140:FF:000012">
    <property type="entry name" value="DNA ligase"/>
    <property type="match status" value="1"/>
</dbReference>
<dbReference type="FunFam" id="3.30.470.30:FF:000001">
    <property type="entry name" value="DNA ligase"/>
    <property type="match status" value="1"/>
</dbReference>
<dbReference type="FunFam" id="3.40.50.10190:FF:000004">
    <property type="entry name" value="DNA ligase"/>
    <property type="match status" value="1"/>
</dbReference>
<dbReference type="FunFam" id="6.20.10.30:FF:000001">
    <property type="entry name" value="DNA ligase"/>
    <property type="match status" value="1"/>
</dbReference>
<dbReference type="Gene3D" id="6.20.10.30">
    <property type="match status" value="1"/>
</dbReference>
<dbReference type="Gene3D" id="1.10.150.20">
    <property type="entry name" value="5' to 3' exonuclease, C-terminal subdomain"/>
    <property type="match status" value="2"/>
</dbReference>
<dbReference type="Gene3D" id="3.40.50.10190">
    <property type="entry name" value="BRCT domain"/>
    <property type="match status" value="1"/>
</dbReference>
<dbReference type="Gene3D" id="3.30.470.30">
    <property type="entry name" value="DNA ligase/mRNA capping enzyme"/>
    <property type="match status" value="1"/>
</dbReference>
<dbReference type="Gene3D" id="1.10.287.610">
    <property type="entry name" value="Helix hairpin bin"/>
    <property type="match status" value="1"/>
</dbReference>
<dbReference type="Gene3D" id="2.40.50.140">
    <property type="entry name" value="Nucleic acid-binding proteins"/>
    <property type="match status" value="1"/>
</dbReference>
<dbReference type="HAMAP" id="MF_01588">
    <property type="entry name" value="DNA_ligase_A"/>
    <property type="match status" value="1"/>
</dbReference>
<dbReference type="InterPro" id="IPR001357">
    <property type="entry name" value="BRCT_dom"/>
</dbReference>
<dbReference type="InterPro" id="IPR036420">
    <property type="entry name" value="BRCT_dom_sf"/>
</dbReference>
<dbReference type="InterPro" id="IPR041663">
    <property type="entry name" value="DisA/LigA_HHH"/>
</dbReference>
<dbReference type="InterPro" id="IPR001679">
    <property type="entry name" value="DNA_ligase"/>
</dbReference>
<dbReference type="InterPro" id="IPR018239">
    <property type="entry name" value="DNA_ligase_AS"/>
</dbReference>
<dbReference type="InterPro" id="IPR033136">
    <property type="entry name" value="DNA_ligase_CS"/>
</dbReference>
<dbReference type="InterPro" id="IPR013839">
    <property type="entry name" value="DNAligase_adenylation"/>
</dbReference>
<dbReference type="InterPro" id="IPR013840">
    <property type="entry name" value="DNAligase_N"/>
</dbReference>
<dbReference type="InterPro" id="IPR003583">
    <property type="entry name" value="Hlx-hairpin-Hlx_DNA-bd_motif"/>
</dbReference>
<dbReference type="InterPro" id="IPR012340">
    <property type="entry name" value="NA-bd_OB-fold"/>
</dbReference>
<dbReference type="InterPro" id="IPR004150">
    <property type="entry name" value="NAD_DNA_ligase_OB"/>
</dbReference>
<dbReference type="InterPro" id="IPR010994">
    <property type="entry name" value="RuvA_2-like"/>
</dbReference>
<dbReference type="InterPro" id="IPR004149">
    <property type="entry name" value="Znf_DNAligase_C4"/>
</dbReference>
<dbReference type="NCBIfam" id="TIGR00575">
    <property type="entry name" value="dnlj"/>
    <property type="match status" value="1"/>
</dbReference>
<dbReference type="NCBIfam" id="NF005932">
    <property type="entry name" value="PRK07956.1"/>
    <property type="match status" value="1"/>
</dbReference>
<dbReference type="PANTHER" id="PTHR23389">
    <property type="entry name" value="CHROMOSOME TRANSMISSION FIDELITY FACTOR 18"/>
    <property type="match status" value="1"/>
</dbReference>
<dbReference type="PANTHER" id="PTHR23389:SF9">
    <property type="entry name" value="DNA LIGASE"/>
    <property type="match status" value="1"/>
</dbReference>
<dbReference type="Pfam" id="PF00533">
    <property type="entry name" value="BRCT"/>
    <property type="match status" value="1"/>
</dbReference>
<dbReference type="Pfam" id="PF01653">
    <property type="entry name" value="DNA_ligase_aden"/>
    <property type="match status" value="1"/>
</dbReference>
<dbReference type="Pfam" id="PF03120">
    <property type="entry name" value="DNA_ligase_OB"/>
    <property type="match status" value="1"/>
</dbReference>
<dbReference type="Pfam" id="PF03119">
    <property type="entry name" value="DNA_ligase_ZBD"/>
    <property type="match status" value="1"/>
</dbReference>
<dbReference type="Pfam" id="PF12826">
    <property type="entry name" value="HHH_2"/>
    <property type="match status" value="1"/>
</dbReference>
<dbReference type="Pfam" id="PF14520">
    <property type="entry name" value="HHH_5"/>
    <property type="match status" value="1"/>
</dbReference>
<dbReference type="Pfam" id="PF22745">
    <property type="entry name" value="Nlig-Ia"/>
    <property type="match status" value="1"/>
</dbReference>
<dbReference type="PIRSF" id="PIRSF001604">
    <property type="entry name" value="LigA"/>
    <property type="match status" value="1"/>
</dbReference>
<dbReference type="SMART" id="SM00292">
    <property type="entry name" value="BRCT"/>
    <property type="match status" value="1"/>
</dbReference>
<dbReference type="SMART" id="SM00278">
    <property type="entry name" value="HhH1"/>
    <property type="match status" value="4"/>
</dbReference>
<dbReference type="SMART" id="SM00532">
    <property type="entry name" value="LIGANc"/>
    <property type="match status" value="1"/>
</dbReference>
<dbReference type="SUPFAM" id="SSF52113">
    <property type="entry name" value="BRCT domain"/>
    <property type="match status" value="1"/>
</dbReference>
<dbReference type="SUPFAM" id="SSF56091">
    <property type="entry name" value="DNA ligase/mRNA capping enzyme, catalytic domain"/>
    <property type="match status" value="1"/>
</dbReference>
<dbReference type="SUPFAM" id="SSF50249">
    <property type="entry name" value="Nucleic acid-binding proteins"/>
    <property type="match status" value="1"/>
</dbReference>
<dbReference type="SUPFAM" id="SSF47781">
    <property type="entry name" value="RuvA domain 2-like"/>
    <property type="match status" value="1"/>
</dbReference>
<dbReference type="PROSITE" id="PS50172">
    <property type="entry name" value="BRCT"/>
    <property type="match status" value="1"/>
</dbReference>
<dbReference type="PROSITE" id="PS01055">
    <property type="entry name" value="DNA_LIGASE_N1"/>
    <property type="match status" value="1"/>
</dbReference>
<dbReference type="PROSITE" id="PS01056">
    <property type="entry name" value="DNA_LIGASE_N2"/>
    <property type="match status" value="1"/>
</dbReference>
<accession>A7ZPL2</accession>
<comment type="function">
    <text evidence="1">DNA ligase that catalyzes the formation of phosphodiester linkages between 5'-phosphoryl and 3'-hydroxyl groups in double-stranded DNA using NAD as a coenzyme and as the energy source for the reaction. It is essential for DNA replication and repair of damaged DNA.</text>
</comment>
<comment type="catalytic activity">
    <reaction evidence="1">
        <text>NAD(+) + (deoxyribonucleotide)n-3'-hydroxyl + 5'-phospho-(deoxyribonucleotide)m = (deoxyribonucleotide)n+m + AMP + beta-nicotinamide D-nucleotide.</text>
        <dbReference type="EC" id="6.5.1.2"/>
    </reaction>
</comment>
<comment type="cofactor">
    <cofactor evidence="1">
        <name>Mg(2+)</name>
        <dbReference type="ChEBI" id="CHEBI:18420"/>
    </cofactor>
    <cofactor evidence="1">
        <name>Mn(2+)</name>
        <dbReference type="ChEBI" id="CHEBI:29035"/>
    </cofactor>
</comment>
<comment type="similarity">
    <text evidence="1">Belongs to the NAD-dependent DNA ligase family. LigA subfamily.</text>
</comment>
<keyword id="KW-0227">DNA damage</keyword>
<keyword id="KW-0234">DNA repair</keyword>
<keyword id="KW-0235">DNA replication</keyword>
<keyword id="KW-0436">Ligase</keyword>
<keyword id="KW-0460">Magnesium</keyword>
<keyword id="KW-0464">Manganese</keyword>
<keyword id="KW-0479">Metal-binding</keyword>
<keyword id="KW-0520">NAD</keyword>
<keyword id="KW-1185">Reference proteome</keyword>
<keyword id="KW-0862">Zinc</keyword>
<protein>
    <recommendedName>
        <fullName evidence="1">DNA ligase</fullName>
        <ecNumber evidence="1">6.5.1.2</ecNumber>
    </recommendedName>
    <alternativeName>
        <fullName evidence="1">Polydeoxyribonucleotide synthase [NAD(+)]</fullName>
    </alternativeName>
</protein>
<feature type="chain" id="PRO_0000340348" description="DNA ligase">
    <location>
        <begin position="1"/>
        <end position="671"/>
    </location>
</feature>
<feature type="domain" description="BRCT" evidence="1">
    <location>
        <begin position="593"/>
        <end position="671"/>
    </location>
</feature>
<feature type="active site" description="N6-AMP-lysine intermediate" evidence="1">
    <location>
        <position position="115"/>
    </location>
</feature>
<feature type="binding site" evidence="1">
    <location>
        <begin position="32"/>
        <end position="36"/>
    </location>
    <ligand>
        <name>NAD(+)</name>
        <dbReference type="ChEBI" id="CHEBI:57540"/>
    </ligand>
</feature>
<feature type="binding site" evidence="1">
    <location>
        <begin position="81"/>
        <end position="82"/>
    </location>
    <ligand>
        <name>NAD(+)</name>
        <dbReference type="ChEBI" id="CHEBI:57540"/>
    </ligand>
</feature>
<feature type="binding site" evidence="1">
    <location>
        <position position="113"/>
    </location>
    <ligand>
        <name>NAD(+)</name>
        <dbReference type="ChEBI" id="CHEBI:57540"/>
    </ligand>
</feature>
<feature type="binding site" evidence="1">
    <location>
        <position position="136"/>
    </location>
    <ligand>
        <name>NAD(+)</name>
        <dbReference type="ChEBI" id="CHEBI:57540"/>
    </ligand>
</feature>
<feature type="binding site" evidence="1">
    <location>
        <position position="173"/>
    </location>
    <ligand>
        <name>NAD(+)</name>
        <dbReference type="ChEBI" id="CHEBI:57540"/>
    </ligand>
</feature>
<feature type="binding site" evidence="1">
    <location>
        <position position="290"/>
    </location>
    <ligand>
        <name>NAD(+)</name>
        <dbReference type="ChEBI" id="CHEBI:57540"/>
    </ligand>
</feature>
<feature type="binding site" evidence="1">
    <location>
        <position position="314"/>
    </location>
    <ligand>
        <name>NAD(+)</name>
        <dbReference type="ChEBI" id="CHEBI:57540"/>
    </ligand>
</feature>
<feature type="binding site" evidence="1">
    <location>
        <position position="408"/>
    </location>
    <ligand>
        <name>Zn(2+)</name>
        <dbReference type="ChEBI" id="CHEBI:29105"/>
    </ligand>
</feature>
<feature type="binding site" evidence="1">
    <location>
        <position position="411"/>
    </location>
    <ligand>
        <name>Zn(2+)</name>
        <dbReference type="ChEBI" id="CHEBI:29105"/>
    </ligand>
</feature>
<feature type="binding site" evidence="1">
    <location>
        <position position="426"/>
    </location>
    <ligand>
        <name>Zn(2+)</name>
        <dbReference type="ChEBI" id="CHEBI:29105"/>
    </ligand>
</feature>
<feature type="binding site" evidence="1">
    <location>
        <position position="432"/>
    </location>
    <ligand>
        <name>Zn(2+)</name>
        <dbReference type="ChEBI" id="CHEBI:29105"/>
    </ligand>
</feature>